<comment type="function">
    <text evidence="1">Catalyzes the conversion of 3-deoxy-D-arabino-heptulosonate 7-phosphate (DAHP) to dehydroquinate (DHQ).</text>
</comment>
<comment type="catalytic activity">
    <reaction evidence="1">
        <text>7-phospho-2-dehydro-3-deoxy-D-arabino-heptonate = 3-dehydroquinate + phosphate</text>
        <dbReference type="Rhea" id="RHEA:21968"/>
        <dbReference type="ChEBI" id="CHEBI:32364"/>
        <dbReference type="ChEBI" id="CHEBI:43474"/>
        <dbReference type="ChEBI" id="CHEBI:58394"/>
        <dbReference type="EC" id="4.2.3.4"/>
    </reaction>
</comment>
<comment type="cofactor">
    <cofactor evidence="1">
        <name>Co(2+)</name>
        <dbReference type="ChEBI" id="CHEBI:48828"/>
    </cofactor>
    <cofactor evidence="1">
        <name>Zn(2+)</name>
        <dbReference type="ChEBI" id="CHEBI:29105"/>
    </cofactor>
    <text evidence="1">Binds 1 divalent metal cation per subunit. Can use either Co(2+) or Zn(2+).</text>
</comment>
<comment type="cofactor">
    <cofactor evidence="1">
        <name>NAD(+)</name>
        <dbReference type="ChEBI" id="CHEBI:57540"/>
    </cofactor>
</comment>
<comment type="pathway">
    <text evidence="1">Metabolic intermediate biosynthesis; chorismate biosynthesis; chorismate from D-erythrose 4-phosphate and phosphoenolpyruvate: step 2/7.</text>
</comment>
<comment type="subcellular location">
    <subcellularLocation>
        <location evidence="1">Cytoplasm</location>
    </subcellularLocation>
</comment>
<comment type="similarity">
    <text evidence="1">Belongs to the sugar phosphate cyclases superfamily. Dehydroquinate synthase family.</text>
</comment>
<proteinExistence type="inferred from homology"/>
<reference key="1">
    <citation type="submission" date="2006-12" db="EMBL/GenBank/DDBJ databases">
        <title>Complete sequence of Pyrobaculum islandicum DSM 4184.</title>
        <authorList>
            <person name="Copeland A."/>
            <person name="Lucas S."/>
            <person name="Lapidus A."/>
            <person name="Barry K."/>
            <person name="Detter J.C."/>
            <person name="Glavina del Rio T."/>
            <person name="Dalin E."/>
            <person name="Tice H."/>
            <person name="Pitluck S."/>
            <person name="Meincke L."/>
            <person name="Brettin T."/>
            <person name="Bruce D."/>
            <person name="Han C."/>
            <person name="Tapia R."/>
            <person name="Gilna P."/>
            <person name="Schmutz J."/>
            <person name="Larimer F."/>
            <person name="Land M."/>
            <person name="Hauser L."/>
            <person name="Kyrpides N."/>
            <person name="Mikhailova N."/>
            <person name="Cozen A.E."/>
            <person name="Fitz-Gibbon S.T."/>
            <person name="House C.H."/>
            <person name="Saltikov C."/>
            <person name="Lowe T."/>
            <person name="Richardson P."/>
        </authorList>
    </citation>
    <scope>NUCLEOTIDE SEQUENCE [LARGE SCALE GENOMIC DNA]</scope>
    <source>
        <strain>DSM 4184 / JCM 9189 / GEO3</strain>
    </source>
</reference>
<name>AROB_PYRIL</name>
<sequence>MRRFFYRHTRGVTEVVVGRGLPYGEYIERPVVLAEEGLRPPIPGAPTLVLRGGEEVKSLEVLTKVYSFLKEVGADRSTTLVAVGGGALLDLATFAAGTYMRGIRLVHIPTTLLAMVDAALGGKGAVDWGPVKNLVGVFYQPAAILCDLSWLETLPERVYRSAFAEVVKYGLALDGDFYSWVRENAKALLARDWGALEYAVYRSLQLKAGVVEVDEFEERGIRQVLNVGHTVGHAVERVLGLLHGEAVAVGIVAELRLSSELGYLRESHVAEAAEVLSSLGLPTSVKATEQQLAEAAALVKFDKKRRGGHIYIPLVVRPGRWILEKIAVEEVEKAVRYVLHQGG</sequence>
<feature type="chain" id="PRO_1000117497" description="3-dehydroquinate synthase">
    <location>
        <begin position="1"/>
        <end position="343"/>
    </location>
</feature>
<feature type="binding site" evidence="1">
    <location>
        <begin position="86"/>
        <end position="90"/>
    </location>
    <ligand>
        <name>NAD(+)</name>
        <dbReference type="ChEBI" id="CHEBI:57540"/>
    </ligand>
</feature>
<feature type="binding site" evidence="1">
    <location>
        <begin position="110"/>
        <end position="111"/>
    </location>
    <ligand>
        <name>NAD(+)</name>
        <dbReference type="ChEBI" id="CHEBI:57540"/>
    </ligand>
</feature>
<feature type="binding site" evidence="1">
    <location>
        <position position="123"/>
    </location>
    <ligand>
        <name>NAD(+)</name>
        <dbReference type="ChEBI" id="CHEBI:57540"/>
    </ligand>
</feature>
<feature type="binding site" evidence="1">
    <location>
        <position position="132"/>
    </location>
    <ligand>
        <name>NAD(+)</name>
        <dbReference type="ChEBI" id="CHEBI:57540"/>
    </ligand>
</feature>
<feature type="binding site" evidence="1">
    <location>
        <position position="165"/>
    </location>
    <ligand>
        <name>Zn(2+)</name>
        <dbReference type="ChEBI" id="CHEBI:29105"/>
    </ligand>
</feature>
<feature type="binding site" evidence="1">
    <location>
        <position position="229"/>
    </location>
    <ligand>
        <name>Zn(2+)</name>
        <dbReference type="ChEBI" id="CHEBI:29105"/>
    </ligand>
</feature>
<feature type="binding site" evidence="1">
    <location>
        <position position="243"/>
    </location>
    <ligand>
        <name>Zn(2+)</name>
        <dbReference type="ChEBI" id="CHEBI:29105"/>
    </ligand>
</feature>
<keyword id="KW-0028">Amino-acid biosynthesis</keyword>
<keyword id="KW-0057">Aromatic amino acid biosynthesis</keyword>
<keyword id="KW-0170">Cobalt</keyword>
<keyword id="KW-0963">Cytoplasm</keyword>
<keyword id="KW-0456">Lyase</keyword>
<keyword id="KW-0479">Metal-binding</keyword>
<keyword id="KW-0520">NAD</keyword>
<keyword id="KW-0547">Nucleotide-binding</keyword>
<keyword id="KW-0862">Zinc</keyword>
<organism>
    <name type="scientific">Pyrobaculum islandicum (strain DSM 4184 / JCM 9189 / GEO3)</name>
    <dbReference type="NCBI Taxonomy" id="384616"/>
    <lineage>
        <taxon>Archaea</taxon>
        <taxon>Thermoproteota</taxon>
        <taxon>Thermoprotei</taxon>
        <taxon>Thermoproteales</taxon>
        <taxon>Thermoproteaceae</taxon>
        <taxon>Pyrobaculum</taxon>
    </lineage>
</organism>
<dbReference type="EC" id="4.2.3.4" evidence="1"/>
<dbReference type="EMBL" id="CP000504">
    <property type="protein sequence ID" value="ABL88923.1"/>
    <property type="molecule type" value="Genomic_DNA"/>
</dbReference>
<dbReference type="RefSeq" id="WP_011763498.1">
    <property type="nucleotide sequence ID" value="NC_008701.1"/>
</dbReference>
<dbReference type="SMR" id="A1RVE1"/>
<dbReference type="STRING" id="384616.Pisl_1774"/>
<dbReference type="GeneID" id="4617865"/>
<dbReference type="KEGG" id="pis:Pisl_1774"/>
<dbReference type="eggNOG" id="arCOG00983">
    <property type="taxonomic scope" value="Archaea"/>
</dbReference>
<dbReference type="HOGENOM" id="CLU_001201_0_1_2"/>
<dbReference type="OrthoDB" id="21407at2157"/>
<dbReference type="UniPathway" id="UPA00053">
    <property type="reaction ID" value="UER00085"/>
</dbReference>
<dbReference type="Proteomes" id="UP000002595">
    <property type="component" value="Chromosome"/>
</dbReference>
<dbReference type="GO" id="GO:0005737">
    <property type="term" value="C:cytoplasm"/>
    <property type="evidence" value="ECO:0007669"/>
    <property type="project" value="UniProtKB-SubCell"/>
</dbReference>
<dbReference type="GO" id="GO:0003856">
    <property type="term" value="F:3-dehydroquinate synthase activity"/>
    <property type="evidence" value="ECO:0007669"/>
    <property type="project" value="UniProtKB-UniRule"/>
</dbReference>
<dbReference type="GO" id="GO:0046872">
    <property type="term" value="F:metal ion binding"/>
    <property type="evidence" value="ECO:0007669"/>
    <property type="project" value="UniProtKB-KW"/>
</dbReference>
<dbReference type="GO" id="GO:0000166">
    <property type="term" value="F:nucleotide binding"/>
    <property type="evidence" value="ECO:0007669"/>
    <property type="project" value="UniProtKB-KW"/>
</dbReference>
<dbReference type="GO" id="GO:0008652">
    <property type="term" value="P:amino acid biosynthetic process"/>
    <property type="evidence" value="ECO:0007669"/>
    <property type="project" value="UniProtKB-KW"/>
</dbReference>
<dbReference type="GO" id="GO:0009073">
    <property type="term" value="P:aromatic amino acid family biosynthetic process"/>
    <property type="evidence" value="ECO:0007669"/>
    <property type="project" value="UniProtKB-KW"/>
</dbReference>
<dbReference type="GO" id="GO:0009423">
    <property type="term" value="P:chorismate biosynthetic process"/>
    <property type="evidence" value="ECO:0007669"/>
    <property type="project" value="UniProtKB-UniRule"/>
</dbReference>
<dbReference type="CDD" id="cd08195">
    <property type="entry name" value="DHQS"/>
    <property type="match status" value="1"/>
</dbReference>
<dbReference type="Gene3D" id="3.40.50.1970">
    <property type="match status" value="1"/>
</dbReference>
<dbReference type="Gene3D" id="1.20.1090.10">
    <property type="entry name" value="Dehydroquinate synthase-like - alpha domain"/>
    <property type="match status" value="1"/>
</dbReference>
<dbReference type="HAMAP" id="MF_00110">
    <property type="entry name" value="DHQ_synthase"/>
    <property type="match status" value="1"/>
</dbReference>
<dbReference type="InterPro" id="IPR050071">
    <property type="entry name" value="Dehydroquinate_synthase"/>
</dbReference>
<dbReference type="InterPro" id="IPR016037">
    <property type="entry name" value="DHQ_synth_AroB"/>
</dbReference>
<dbReference type="InterPro" id="IPR030963">
    <property type="entry name" value="DHQ_synth_fam"/>
</dbReference>
<dbReference type="InterPro" id="IPR030960">
    <property type="entry name" value="DHQS/DOIS_N"/>
</dbReference>
<dbReference type="InterPro" id="IPR056179">
    <property type="entry name" value="DHQS_C"/>
</dbReference>
<dbReference type="PANTHER" id="PTHR43622">
    <property type="entry name" value="3-DEHYDROQUINATE SYNTHASE"/>
    <property type="match status" value="1"/>
</dbReference>
<dbReference type="PANTHER" id="PTHR43622:SF1">
    <property type="entry name" value="3-DEHYDROQUINATE SYNTHASE"/>
    <property type="match status" value="1"/>
</dbReference>
<dbReference type="Pfam" id="PF01761">
    <property type="entry name" value="DHQ_synthase"/>
    <property type="match status" value="1"/>
</dbReference>
<dbReference type="Pfam" id="PF24621">
    <property type="entry name" value="DHQS_C"/>
    <property type="match status" value="1"/>
</dbReference>
<dbReference type="PIRSF" id="PIRSF001455">
    <property type="entry name" value="DHQ_synth"/>
    <property type="match status" value="1"/>
</dbReference>
<dbReference type="SUPFAM" id="SSF56796">
    <property type="entry name" value="Dehydroquinate synthase-like"/>
    <property type="match status" value="1"/>
</dbReference>
<protein>
    <recommendedName>
        <fullName evidence="1">3-dehydroquinate synthase</fullName>
        <shortName evidence="1">DHQS</shortName>
        <ecNumber evidence="1">4.2.3.4</ecNumber>
    </recommendedName>
</protein>
<accession>A1RVE1</accession>
<evidence type="ECO:0000255" key="1">
    <source>
        <dbReference type="HAMAP-Rule" id="MF_00110"/>
    </source>
</evidence>
<gene>
    <name evidence="1" type="primary">aroB</name>
    <name type="ordered locus">Pisl_1774</name>
</gene>